<organism>
    <name type="scientific">Mycoplasma genitalium (strain ATCC 33530 / DSM 19775 / NCTC 10195 / G37)</name>
    <name type="common">Mycoplasmoides genitalium</name>
    <dbReference type="NCBI Taxonomy" id="243273"/>
    <lineage>
        <taxon>Bacteria</taxon>
        <taxon>Bacillati</taxon>
        <taxon>Mycoplasmatota</taxon>
        <taxon>Mycoplasmoidales</taxon>
        <taxon>Mycoplasmoidaceae</taxon>
        <taxon>Mycoplasmoides</taxon>
    </lineage>
</organism>
<dbReference type="EMBL" id="L43967">
    <property type="protein sequence ID" value="AAC71420.1"/>
    <property type="molecule type" value="Genomic_DNA"/>
</dbReference>
<dbReference type="PIR" id="C64222">
    <property type="entry name" value="C64222"/>
</dbReference>
<dbReference type="RefSeq" id="WP_010869370.1">
    <property type="nucleotide sequence ID" value="NC_000908.2"/>
</dbReference>
<dbReference type="SMR" id="P47444"/>
<dbReference type="STRING" id="243273.MG_202"/>
<dbReference type="GeneID" id="88282333"/>
<dbReference type="KEGG" id="mge:MG_202"/>
<dbReference type="eggNOG" id="ENOG5031Z99">
    <property type="taxonomic scope" value="Bacteria"/>
</dbReference>
<dbReference type="HOGENOM" id="CLU_2035480_0_0_14"/>
<dbReference type="InParanoid" id="P47444"/>
<dbReference type="OrthoDB" id="9921551at2"/>
<dbReference type="BioCyc" id="MGEN243273:G1GJ2-234-MONOMER"/>
<dbReference type="Proteomes" id="UP000000807">
    <property type="component" value="Chromosome"/>
</dbReference>
<dbReference type="NCBIfam" id="NF045738">
    <property type="entry name" value="MPN121"/>
    <property type="match status" value="1"/>
</dbReference>
<proteinExistence type="predicted"/>
<gene>
    <name type="ordered locus">MG202</name>
</gene>
<accession>P47444</accession>
<sequence>MSEQKRRTIQIAISEDHYEELQKALELLKGTQLPFSTTVEQFVELILSNYVATSNKISSLAKSGFDVASLQQELEKIGNLSGVDDNLKGFLSELLKTSRNGFSNPNKDGKKNDDDNNSSSKS</sequence>
<evidence type="ECO:0000256" key="1">
    <source>
        <dbReference type="SAM" id="MobiDB-lite"/>
    </source>
</evidence>
<keyword id="KW-1185">Reference proteome</keyword>
<protein>
    <recommendedName>
        <fullName>Uncharacterized protein MG202</fullName>
    </recommendedName>
</protein>
<name>Y202_MYCGE</name>
<feature type="chain" id="PRO_0000210452" description="Uncharacterized protein MG202">
    <location>
        <begin position="1"/>
        <end position="122"/>
    </location>
</feature>
<feature type="region of interest" description="Disordered" evidence="1">
    <location>
        <begin position="97"/>
        <end position="122"/>
    </location>
</feature>
<reference key="1">
    <citation type="journal article" date="1995" name="Science">
        <title>The minimal gene complement of Mycoplasma genitalium.</title>
        <authorList>
            <person name="Fraser C.M."/>
            <person name="Gocayne J.D."/>
            <person name="White O."/>
            <person name="Adams M.D."/>
            <person name="Clayton R.A."/>
            <person name="Fleischmann R.D."/>
            <person name="Bult C.J."/>
            <person name="Kerlavage A.R."/>
            <person name="Sutton G.G."/>
            <person name="Kelley J.M."/>
            <person name="Fritchman J.L."/>
            <person name="Weidman J.F."/>
            <person name="Small K.V."/>
            <person name="Sandusky M."/>
            <person name="Fuhrmann J.L."/>
            <person name="Nguyen D.T."/>
            <person name="Utterback T.R."/>
            <person name="Saudek D.M."/>
            <person name="Phillips C.A."/>
            <person name="Merrick J.M."/>
            <person name="Tomb J.-F."/>
            <person name="Dougherty B.A."/>
            <person name="Bott K.F."/>
            <person name="Hu P.-C."/>
            <person name="Lucier T.S."/>
            <person name="Peterson S.N."/>
            <person name="Smith H.O."/>
            <person name="Hutchison C.A. III"/>
            <person name="Venter J.C."/>
        </authorList>
    </citation>
    <scope>NUCLEOTIDE SEQUENCE [LARGE SCALE GENOMIC DNA]</scope>
    <source>
        <strain>ATCC 33530 / DSM 19775 / NCTC 10195 / G37</strain>
    </source>
</reference>